<sequence length="122" mass="14527">MASLLKAFIDPKKNFLARMHMKAISTRLRRYGLRYDDLYDQYYSMDIKEAMNRLPREVVDARNQRLKRAMDLSMKHEYLPKDLQAVQTPFRGYLQDMLALVERESKEREALGALPLYQRTLP</sequence>
<dbReference type="EMBL" id="AL034567">
    <property type="protein sequence ID" value="CAA22574.1"/>
    <property type="molecule type" value="Genomic_DNA"/>
</dbReference>
<dbReference type="EMBL" id="AL161581">
    <property type="protein sequence ID" value="CAB79964.1"/>
    <property type="molecule type" value="Genomic_DNA"/>
</dbReference>
<dbReference type="EMBL" id="CP002687">
    <property type="protein sequence ID" value="AEE86065.1"/>
    <property type="molecule type" value="Genomic_DNA"/>
</dbReference>
<dbReference type="EMBL" id="AF324709">
    <property type="protein sequence ID" value="AAG40060.1"/>
    <property type="molecule type" value="mRNA"/>
</dbReference>
<dbReference type="EMBL" id="AF326874">
    <property type="protein sequence ID" value="AAG41456.1"/>
    <property type="molecule type" value="mRNA"/>
</dbReference>
<dbReference type="EMBL" id="AF339695">
    <property type="protein sequence ID" value="AAK00377.1"/>
    <property type="molecule type" value="mRNA"/>
</dbReference>
<dbReference type="EMBL" id="AF361839">
    <property type="protein sequence ID" value="AAK32851.1"/>
    <property type="molecule type" value="mRNA"/>
</dbReference>
<dbReference type="EMBL" id="AY066050">
    <property type="protein sequence ID" value="AAL47417.1"/>
    <property type="molecule type" value="mRNA"/>
</dbReference>
<dbReference type="EMBL" id="AY087333">
    <property type="protein sequence ID" value="AAM64883.1"/>
    <property type="molecule type" value="mRNA"/>
</dbReference>
<dbReference type="PIR" id="T05357">
    <property type="entry name" value="T05357"/>
</dbReference>
<dbReference type="RefSeq" id="NP_194973.1">
    <molecule id="Q9SUU5-1"/>
    <property type="nucleotide sequence ID" value="NM_119399.3"/>
</dbReference>
<dbReference type="SMR" id="Q9SUU5"/>
<dbReference type="BioGRID" id="14668">
    <property type="interactions" value="20"/>
</dbReference>
<dbReference type="FunCoup" id="Q9SUU5">
    <property type="interactions" value="2089"/>
</dbReference>
<dbReference type="IntAct" id="Q9SUU5">
    <property type="interactions" value="2"/>
</dbReference>
<dbReference type="STRING" id="3702.Q9SUU5"/>
<dbReference type="MetOSite" id="Q9SUU5"/>
<dbReference type="PaxDb" id="3702-AT4G32470.1"/>
<dbReference type="ProteomicsDB" id="236464">
    <molecule id="Q9SUU5-1"/>
</dbReference>
<dbReference type="EnsemblPlants" id="AT4G32470.1">
    <molecule id="Q9SUU5-1"/>
    <property type="protein sequence ID" value="AT4G32470.1"/>
    <property type="gene ID" value="AT4G32470"/>
</dbReference>
<dbReference type="GeneID" id="829382"/>
<dbReference type="Gramene" id="AT4G32470.1">
    <molecule id="Q9SUU5-1"/>
    <property type="protein sequence ID" value="AT4G32470.1"/>
    <property type="gene ID" value="AT4G32470"/>
</dbReference>
<dbReference type="KEGG" id="ath:AT4G32470"/>
<dbReference type="Araport" id="AT4G32470"/>
<dbReference type="TAIR" id="AT4G32470"/>
<dbReference type="eggNOG" id="KOG3440">
    <property type="taxonomic scope" value="Eukaryota"/>
</dbReference>
<dbReference type="HOGENOM" id="CLU_115154_3_0_1"/>
<dbReference type="InParanoid" id="Q9SUU5"/>
<dbReference type="OMA" id="QYESMDI"/>
<dbReference type="OrthoDB" id="425749at2759"/>
<dbReference type="PhylomeDB" id="Q9SUU5"/>
<dbReference type="BioCyc" id="ARA:MONOMERQT-2770"/>
<dbReference type="BioCyc" id="MetaCyc:MONOMERQT-2770"/>
<dbReference type="CD-CODE" id="4299E36E">
    <property type="entry name" value="Nucleolus"/>
</dbReference>
<dbReference type="PRO" id="PR:Q9SUU5"/>
<dbReference type="Proteomes" id="UP000006548">
    <property type="component" value="Chromosome 4"/>
</dbReference>
<dbReference type="ExpressionAtlas" id="Q9SUU5">
    <property type="expression patterns" value="baseline and differential"/>
</dbReference>
<dbReference type="GO" id="GO:0005743">
    <property type="term" value="C:mitochondrial inner membrane"/>
    <property type="evidence" value="ECO:0007669"/>
    <property type="project" value="UniProtKB-SubCell"/>
</dbReference>
<dbReference type="GO" id="GO:0005739">
    <property type="term" value="C:mitochondrion"/>
    <property type="evidence" value="ECO:0007005"/>
    <property type="project" value="TAIR"/>
</dbReference>
<dbReference type="GO" id="GO:0000325">
    <property type="term" value="C:plant-type vacuole"/>
    <property type="evidence" value="ECO:0007005"/>
    <property type="project" value="TAIR"/>
</dbReference>
<dbReference type="GO" id="GO:0005886">
    <property type="term" value="C:plasma membrane"/>
    <property type="evidence" value="ECO:0007005"/>
    <property type="project" value="TAIR"/>
</dbReference>
<dbReference type="GO" id="GO:0045275">
    <property type="term" value="C:respiratory chain complex III"/>
    <property type="evidence" value="ECO:0007669"/>
    <property type="project" value="InterPro"/>
</dbReference>
<dbReference type="GO" id="GO:0006122">
    <property type="term" value="P:mitochondrial electron transport, ubiquinol to cytochrome c"/>
    <property type="evidence" value="ECO:0007669"/>
    <property type="project" value="InterPro"/>
</dbReference>
<dbReference type="FunFam" id="1.10.1090.10:FF:000002">
    <property type="entry name" value="Cytochrome b-c1 complex subunit 7"/>
    <property type="match status" value="1"/>
</dbReference>
<dbReference type="Gene3D" id="1.10.1090.10">
    <property type="entry name" value="Cytochrome b-c1 complex subunit 7"/>
    <property type="match status" value="1"/>
</dbReference>
<dbReference type="InterPro" id="IPR003197">
    <property type="entry name" value="QCR7"/>
</dbReference>
<dbReference type="InterPro" id="IPR036544">
    <property type="entry name" value="QCR7_sf"/>
</dbReference>
<dbReference type="PANTHER" id="PTHR12022:SF3">
    <property type="entry name" value="CYTOCHROME B-C1 COMPLEX SUBUNIT 7-1, MITOCHONDRIAL"/>
    <property type="match status" value="1"/>
</dbReference>
<dbReference type="PANTHER" id="PTHR12022">
    <property type="entry name" value="UBIQUINOL-CYTOCHROME C REDUCTASE COMPLEX 14 KD PROTEIN"/>
    <property type="match status" value="1"/>
</dbReference>
<dbReference type="Pfam" id="PF02271">
    <property type="entry name" value="UCR_14kD"/>
    <property type="match status" value="1"/>
</dbReference>
<dbReference type="PIRSF" id="PIRSF000022">
    <property type="entry name" value="Bc1_14K"/>
    <property type="match status" value="1"/>
</dbReference>
<dbReference type="SUPFAM" id="SSF81524">
    <property type="entry name" value="14 kDa protein of cytochrome bc1 complex (Ubiquinol-cytochrome c reductase)"/>
    <property type="match status" value="1"/>
</dbReference>
<organism>
    <name type="scientific">Arabidopsis thaliana</name>
    <name type="common">Mouse-ear cress</name>
    <dbReference type="NCBI Taxonomy" id="3702"/>
    <lineage>
        <taxon>Eukaryota</taxon>
        <taxon>Viridiplantae</taxon>
        <taxon>Streptophyta</taxon>
        <taxon>Embryophyta</taxon>
        <taxon>Tracheophyta</taxon>
        <taxon>Spermatophyta</taxon>
        <taxon>Magnoliopsida</taxon>
        <taxon>eudicotyledons</taxon>
        <taxon>Gunneridae</taxon>
        <taxon>Pentapetalae</taxon>
        <taxon>rosids</taxon>
        <taxon>malvids</taxon>
        <taxon>Brassicales</taxon>
        <taxon>Brassicaceae</taxon>
        <taxon>Camelineae</taxon>
        <taxon>Arabidopsis</taxon>
    </lineage>
</organism>
<protein>
    <recommendedName>
        <fullName>Cytochrome b-c1 complex subunit 7-1, mitochondrial</fullName>
    </recommendedName>
    <alternativeName>
        <fullName>Complex III subunit 7-1</fullName>
    </alternativeName>
    <alternativeName>
        <fullName>Complex III subunit VII</fullName>
    </alternativeName>
    <alternativeName>
        <fullName>Ubiquinol-cytochrome c oxidoreductase subunit 7-1</fullName>
    </alternativeName>
</protein>
<proteinExistence type="evidence at protein level"/>
<feature type="chain" id="PRO_0000418644" description="Cytochrome b-c1 complex subunit 7-1, mitochondrial">
    <location>
        <begin position="1"/>
        <end position="122"/>
    </location>
</feature>
<accession>Q9SUU5</accession>
<name>QCR71_ARATH</name>
<evidence type="ECO:0000250" key="1">
    <source>
        <dbReference type="UniProtKB" id="P00128"/>
    </source>
</evidence>
<evidence type="ECO:0000269" key="2">
    <source>
    </source>
</evidence>
<evidence type="ECO:0000269" key="3">
    <source>
    </source>
</evidence>
<evidence type="ECO:0000269" key="4">
    <source>
    </source>
</evidence>
<evidence type="ECO:0000305" key="5"/>
<gene>
    <name type="primary">QCR7-1</name>
    <name type="ordered locus">At4g32470</name>
    <name type="ORF">F8B4.170</name>
</gene>
<reference key="1">
    <citation type="journal article" date="1999" name="Nature">
        <title>Sequence and analysis of chromosome 4 of the plant Arabidopsis thaliana.</title>
        <authorList>
            <person name="Mayer K.F.X."/>
            <person name="Schueller C."/>
            <person name="Wambutt R."/>
            <person name="Murphy G."/>
            <person name="Volckaert G."/>
            <person name="Pohl T."/>
            <person name="Duesterhoeft A."/>
            <person name="Stiekema W."/>
            <person name="Entian K.-D."/>
            <person name="Terryn N."/>
            <person name="Harris B."/>
            <person name="Ansorge W."/>
            <person name="Brandt P."/>
            <person name="Grivell L.A."/>
            <person name="Rieger M."/>
            <person name="Weichselgartner M."/>
            <person name="de Simone V."/>
            <person name="Obermaier B."/>
            <person name="Mache R."/>
            <person name="Mueller M."/>
            <person name="Kreis M."/>
            <person name="Delseny M."/>
            <person name="Puigdomenech P."/>
            <person name="Watson M."/>
            <person name="Schmidtheini T."/>
            <person name="Reichert B."/>
            <person name="Portetelle D."/>
            <person name="Perez-Alonso M."/>
            <person name="Boutry M."/>
            <person name="Bancroft I."/>
            <person name="Vos P."/>
            <person name="Hoheisel J."/>
            <person name="Zimmermann W."/>
            <person name="Wedler H."/>
            <person name="Ridley P."/>
            <person name="Langham S.-A."/>
            <person name="McCullagh B."/>
            <person name="Bilham L."/>
            <person name="Robben J."/>
            <person name="van der Schueren J."/>
            <person name="Grymonprez B."/>
            <person name="Chuang Y.-J."/>
            <person name="Vandenbussche F."/>
            <person name="Braeken M."/>
            <person name="Weltjens I."/>
            <person name="Voet M."/>
            <person name="Bastiaens I."/>
            <person name="Aert R."/>
            <person name="Defoor E."/>
            <person name="Weitzenegger T."/>
            <person name="Bothe G."/>
            <person name="Ramsperger U."/>
            <person name="Hilbert H."/>
            <person name="Braun M."/>
            <person name="Holzer E."/>
            <person name="Brandt A."/>
            <person name="Peters S."/>
            <person name="van Staveren M."/>
            <person name="Dirkse W."/>
            <person name="Mooijman P."/>
            <person name="Klein Lankhorst R."/>
            <person name="Rose M."/>
            <person name="Hauf J."/>
            <person name="Koetter P."/>
            <person name="Berneiser S."/>
            <person name="Hempel S."/>
            <person name="Feldpausch M."/>
            <person name="Lamberth S."/>
            <person name="Van den Daele H."/>
            <person name="De Keyser A."/>
            <person name="Buysshaert C."/>
            <person name="Gielen J."/>
            <person name="Villarroel R."/>
            <person name="De Clercq R."/>
            <person name="van Montagu M."/>
            <person name="Rogers J."/>
            <person name="Cronin A."/>
            <person name="Quail M.A."/>
            <person name="Bray-Allen S."/>
            <person name="Clark L."/>
            <person name="Doggett J."/>
            <person name="Hall S."/>
            <person name="Kay M."/>
            <person name="Lennard N."/>
            <person name="McLay K."/>
            <person name="Mayes R."/>
            <person name="Pettett A."/>
            <person name="Rajandream M.A."/>
            <person name="Lyne M."/>
            <person name="Benes V."/>
            <person name="Rechmann S."/>
            <person name="Borkova D."/>
            <person name="Bloecker H."/>
            <person name="Scharfe M."/>
            <person name="Grimm M."/>
            <person name="Loehnert T.-H."/>
            <person name="Dose S."/>
            <person name="de Haan M."/>
            <person name="Maarse A.C."/>
            <person name="Schaefer M."/>
            <person name="Mueller-Auer S."/>
            <person name="Gabel C."/>
            <person name="Fuchs M."/>
            <person name="Fartmann B."/>
            <person name="Granderath K."/>
            <person name="Dauner D."/>
            <person name="Herzl A."/>
            <person name="Neumann S."/>
            <person name="Argiriou A."/>
            <person name="Vitale D."/>
            <person name="Liguori R."/>
            <person name="Piravandi E."/>
            <person name="Massenet O."/>
            <person name="Quigley F."/>
            <person name="Clabauld G."/>
            <person name="Muendlein A."/>
            <person name="Felber R."/>
            <person name="Schnabl S."/>
            <person name="Hiller R."/>
            <person name="Schmidt W."/>
            <person name="Lecharny A."/>
            <person name="Aubourg S."/>
            <person name="Chefdor F."/>
            <person name="Cooke R."/>
            <person name="Berger C."/>
            <person name="Monfort A."/>
            <person name="Casacuberta E."/>
            <person name="Gibbons T."/>
            <person name="Weber N."/>
            <person name="Vandenbol M."/>
            <person name="Bargues M."/>
            <person name="Terol J."/>
            <person name="Torres A."/>
            <person name="Perez-Perez A."/>
            <person name="Purnelle B."/>
            <person name="Bent E."/>
            <person name="Johnson S."/>
            <person name="Tacon D."/>
            <person name="Jesse T."/>
            <person name="Heijnen L."/>
            <person name="Schwarz S."/>
            <person name="Scholler P."/>
            <person name="Heber S."/>
            <person name="Francs P."/>
            <person name="Bielke C."/>
            <person name="Frishman D."/>
            <person name="Haase D."/>
            <person name="Lemcke K."/>
            <person name="Mewes H.-W."/>
            <person name="Stocker S."/>
            <person name="Zaccaria P."/>
            <person name="Bevan M."/>
            <person name="Wilson R.K."/>
            <person name="de la Bastide M."/>
            <person name="Habermann K."/>
            <person name="Parnell L."/>
            <person name="Dedhia N."/>
            <person name="Gnoj L."/>
            <person name="Schutz K."/>
            <person name="Huang E."/>
            <person name="Spiegel L."/>
            <person name="Sekhon M."/>
            <person name="Murray J."/>
            <person name="Sheet P."/>
            <person name="Cordes M."/>
            <person name="Abu-Threideh J."/>
            <person name="Stoneking T."/>
            <person name="Kalicki J."/>
            <person name="Graves T."/>
            <person name="Harmon G."/>
            <person name="Edwards J."/>
            <person name="Latreille P."/>
            <person name="Courtney L."/>
            <person name="Cloud J."/>
            <person name="Abbott A."/>
            <person name="Scott K."/>
            <person name="Johnson D."/>
            <person name="Minx P."/>
            <person name="Bentley D."/>
            <person name="Fulton B."/>
            <person name="Miller N."/>
            <person name="Greco T."/>
            <person name="Kemp K."/>
            <person name="Kramer J."/>
            <person name="Fulton L."/>
            <person name="Mardis E."/>
            <person name="Dante M."/>
            <person name="Pepin K."/>
            <person name="Hillier L.W."/>
            <person name="Nelson J."/>
            <person name="Spieth J."/>
            <person name="Ryan E."/>
            <person name="Andrews S."/>
            <person name="Geisel C."/>
            <person name="Layman D."/>
            <person name="Du H."/>
            <person name="Ali J."/>
            <person name="Berghoff A."/>
            <person name="Jones K."/>
            <person name="Drone K."/>
            <person name="Cotton M."/>
            <person name="Joshu C."/>
            <person name="Antonoiu B."/>
            <person name="Zidanic M."/>
            <person name="Strong C."/>
            <person name="Sun H."/>
            <person name="Lamar B."/>
            <person name="Yordan C."/>
            <person name="Ma P."/>
            <person name="Zhong J."/>
            <person name="Preston R."/>
            <person name="Vil D."/>
            <person name="Shekher M."/>
            <person name="Matero A."/>
            <person name="Shah R."/>
            <person name="Swaby I.K."/>
            <person name="O'Shaughnessy A."/>
            <person name="Rodriguez M."/>
            <person name="Hoffman J."/>
            <person name="Till S."/>
            <person name="Granat S."/>
            <person name="Shohdy N."/>
            <person name="Hasegawa A."/>
            <person name="Hameed A."/>
            <person name="Lodhi M."/>
            <person name="Johnson A."/>
            <person name="Chen E."/>
            <person name="Marra M.A."/>
            <person name="Martienssen R."/>
            <person name="McCombie W.R."/>
        </authorList>
    </citation>
    <scope>NUCLEOTIDE SEQUENCE [LARGE SCALE GENOMIC DNA]</scope>
    <source>
        <strain>cv. Columbia</strain>
    </source>
</reference>
<reference key="2">
    <citation type="journal article" date="2017" name="Plant J.">
        <title>Araport11: a complete reannotation of the Arabidopsis thaliana reference genome.</title>
        <authorList>
            <person name="Cheng C.Y."/>
            <person name="Krishnakumar V."/>
            <person name="Chan A.P."/>
            <person name="Thibaud-Nissen F."/>
            <person name="Schobel S."/>
            <person name="Town C.D."/>
        </authorList>
    </citation>
    <scope>GENOME REANNOTATION</scope>
    <source>
        <strain>cv. Columbia</strain>
    </source>
</reference>
<reference key="3">
    <citation type="journal article" date="2003" name="Science">
        <title>Empirical analysis of transcriptional activity in the Arabidopsis genome.</title>
        <authorList>
            <person name="Yamada K."/>
            <person name="Lim J."/>
            <person name="Dale J.M."/>
            <person name="Chen H."/>
            <person name="Shinn P."/>
            <person name="Palm C.J."/>
            <person name="Southwick A.M."/>
            <person name="Wu H.C."/>
            <person name="Kim C.J."/>
            <person name="Nguyen M."/>
            <person name="Pham P.K."/>
            <person name="Cheuk R.F."/>
            <person name="Karlin-Newmann G."/>
            <person name="Liu S.X."/>
            <person name="Lam B."/>
            <person name="Sakano H."/>
            <person name="Wu T."/>
            <person name="Yu G."/>
            <person name="Miranda M."/>
            <person name="Quach H.L."/>
            <person name="Tripp M."/>
            <person name="Chang C.H."/>
            <person name="Lee J.M."/>
            <person name="Toriumi M.J."/>
            <person name="Chan M.M."/>
            <person name="Tang C.C."/>
            <person name="Onodera C.S."/>
            <person name="Deng J.M."/>
            <person name="Akiyama K."/>
            <person name="Ansari Y."/>
            <person name="Arakawa T."/>
            <person name="Banh J."/>
            <person name="Banno F."/>
            <person name="Bowser L."/>
            <person name="Brooks S.Y."/>
            <person name="Carninci P."/>
            <person name="Chao Q."/>
            <person name="Choy N."/>
            <person name="Enju A."/>
            <person name="Goldsmith A.D."/>
            <person name="Gurjal M."/>
            <person name="Hansen N.F."/>
            <person name="Hayashizaki Y."/>
            <person name="Johnson-Hopson C."/>
            <person name="Hsuan V.W."/>
            <person name="Iida K."/>
            <person name="Karnes M."/>
            <person name="Khan S."/>
            <person name="Koesema E."/>
            <person name="Ishida J."/>
            <person name="Jiang P.X."/>
            <person name="Jones T."/>
            <person name="Kawai J."/>
            <person name="Kamiya A."/>
            <person name="Meyers C."/>
            <person name="Nakajima M."/>
            <person name="Narusaka M."/>
            <person name="Seki M."/>
            <person name="Sakurai T."/>
            <person name="Satou M."/>
            <person name="Tamse R."/>
            <person name="Vaysberg M."/>
            <person name="Wallender E.K."/>
            <person name="Wong C."/>
            <person name="Yamamura Y."/>
            <person name="Yuan S."/>
            <person name="Shinozaki K."/>
            <person name="Davis R.W."/>
            <person name="Theologis A."/>
            <person name="Ecker J.R."/>
        </authorList>
    </citation>
    <scope>NUCLEOTIDE SEQUENCE [LARGE SCALE MRNA]</scope>
    <source>
        <strain>cv. Columbia</strain>
    </source>
</reference>
<reference key="4">
    <citation type="submission" date="2002-03" db="EMBL/GenBank/DDBJ databases">
        <title>Full-length cDNA from Arabidopsis thaliana.</title>
        <authorList>
            <person name="Brover V.V."/>
            <person name="Troukhan M.E."/>
            <person name="Alexandrov N.A."/>
            <person name="Lu Y.-P."/>
            <person name="Flavell R.B."/>
            <person name="Feldmann K.A."/>
        </authorList>
    </citation>
    <scope>NUCLEOTIDE SEQUENCE [LARGE SCALE MRNA]</scope>
</reference>
<reference key="5">
    <citation type="journal article" date="2008" name="J. Proteome Res.">
        <title>Resolving and identifying protein components of plant mitochondrial respiratory complexes using three dimensions of gel electrophoresis.</title>
        <authorList>
            <person name="Meyer E.H."/>
            <person name="Taylor N.L."/>
            <person name="Millar A.H."/>
        </authorList>
    </citation>
    <scope>PROTEIN SEQUENCE OF 34-49; 81-104 AND 106-120</scope>
    <scope>SUBUNIT</scope>
    <scope>SUBCELLULAR LOCATION</scope>
    <scope>IDENTIFICATION BY MASS SPECTROMETRY</scope>
</reference>
<reference key="6">
    <citation type="journal article" date="2003" name="Plant Physiol.">
        <title>New insights into the respiratory chain of plant mitochondria. Supercomplexes and a unique composition of complex II.</title>
        <authorList>
            <person name="Eubel H."/>
            <person name="Jansch L."/>
            <person name="Braun H.P."/>
        </authorList>
    </citation>
    <scope>SUBUNIT</scope>
</reference>
<reference key="7">
    <citation type="journal article" date="2007" name="Mol. Cell. Proteomics">
        <title>Multidimensional protein identification technology (MudPIT) analysis of ubiquitinated proteins in plants.</title>
        <authorList>
            <person name="Maor R."/>
            <person name="Jones A."/>
            <person name="Nuehse T.S."/>
            <person name="Studholme D.J."/>
            <person name="Peck S.C."/>
            <person name="Shirasu K."/>
        </authorList>
    </citation>
    <scope>IDENTIFICATION BY MASS SPECTROMETRY [LARGE SCALE ANALYSIS]</scope>
    <source>
        <strain>cv. Landsberg erecta</strain>
    </source>
</reference>
<reference key="8">
    <citation type="journal article" date="2008" name="Plant Physiol.">
        <title>Arabidopsis PPR40 connects abiotic stress responses to mitochondrial electron transport.</title>
        <authorList>
            <person name="Zsigmond L."/>
            <person name="Rigo G."/>
            <person name="Szarka A."/>
            <person name="Szekely G."/>
            <person name="Oetvoes K."/>
            <person name="Darula Z."/>
            <person name="Medzihradszky K.F."/>
            <person name="Koncz C."/>
            <person name="Koncz Z."/>
            <person name="Szabados L."/>
        </authorList>
    </citation>
    <scope>SUBUNIT</scope>
    <scope>IDENTIFICATION BY MASS SPECTROMETRY</scope>
    <scope>NOMENCLATURE</scope>
    <source>
        <strain>cv. Columbia</strain>
    </source>
</reference>
<reference key="9">
    <citation type="journal article" date="2009" name="J. Proteomics">
        <title>Phosphoproteomic analysis of nuclei-enriched fractions from Arabidopsis thaliana.</title>
        <authorList>
            <person name="Jones A.M.E."/>
            <person name="MacLean D."/>
            <person name="Studholme D.J."/>
            <person name="Serna-Sanz A."/>
            <person name="Andreasson E."/>
            <person name="Rathjen J.P."/>
            <person name="Peck S.C."/>
        </authorList>
    </citation>
    <scope>IDENTIFICATION BY MASS SPECTROMETRY [LARGE SCALE ANALYSIS]</scope>
    <source>
        <strain>cv. Columbia</strain>
    </source>
</reference>
<comment type="function">
    <text evidence="1">Component of the ubiquinol-cytochrome c oxidoreductase, a multisubunit transmembrane complex that is part of the mitochondrial electron transport chain which drives oxidative phosphorylation. The respiratory chain contains 3 multisubunit complexes succinate dehydrogenase (complex II, CII), ubiquinol-cytochrome c oxidoreductase (cytochrome b-c1 complex, complex III, CIII) and cytochrome c oxidase (complex IV, CIV), that cooperate to transfer electrons derived from NADH and succinate to molecular oxygen, creating an electrochemical gradient over the inner membrane that drives transmembrane transport and the ATP synthase. The cytochrome b-c1 complex catalyzes electron transfer from ubiquinol to cytochrome c, linking this redox reaction to translocation of protons across the mitochondrial inner membrane, with protons being carried across the membrane as hydrogens on the quinol. In the process called Q cycle, 2 protons are consumed from the matrix, 4 protons are released into the intermembrane space and 2 electrons are passed to cytochrome c.</text>
</comment>
<comment type="subunit">
    <text evidence="2 3 4">Component of the ubiquinol-cytochrome c oxidoreductase (cytochrome b-c1 complex, complex III, CIII), a multisubunit enzyme composed of 10 subunits. The complex is composed of 3 respiratory subunits cytochrome b (MT-CYB), cytochrome c1 (CYC1-1 or CYC1-2) and Rieske protein (UCR1-1 or UCR1-2), 2 core protein subunits MPPalpha1 (or MPPalpha2) and MPPB, and 5 low-molecular weight protein subunits QCR7-1 (or QCR7-2), UCRQ-1 (or UCRQ-2), QCR9, UCRY and probably QCR6-1 (or QCR6-2) (PubMed:18189341, PubMed:18305213). The complex exists as an obligatory dimer and forms supercomplexes (SCs) in the inner mitochondrial membrane with NADH-ubiquinone oxidoreductase (complex I, CI), resulting in different assemblies (supercomplexes SCI(1)III(2) and SCI(2)III(4)) (PubMed:12970493).</text>
</comment>
<comment type="subcellular location">
    <subcellularLocation>
        <location evidence="3">Mitochondrion inner membrane</location>
        <topology evidence="1">Peripheral membrane protein</topology>
        <orientation evidence="1">Matrix side</orientation>
    </subcellularLocation>
</comment>
<comment type="alternative products">
    <event type="alternative splicing"/>
    <isoform>
        <id>Q9SUU5-1</id>
        <name>1</name>
        <sequence type="displayed"/>
    </isoform>
    <text>A number of isoforms are produced. According to EST sequences.</text>
</comment>
<comment type="similarity">
    <text evidence="5">Belongs to the UQCRB/QCR7 family.</text>
</comment>
<keyword id="KW-0025">Alternative splicing</keyword>
<keyword id="KW-0903">Direct protein sequencing</keyword>
<keyword id="KW-0249">Electron transport</keyword>
<keyword id="KW-0472">Membrane</keyword>
<keyword id="KW-0496">Mitochondrion</keyword>
<keyword id="KW-0999">Mitochondrion inner membrane</keyword>
<keyword id="KW-1185">Reference proteome</keyword>
<keyword id="KW-0679">Respiratory chain</keyword>
<keyword id="KW-0813">Transport</keyword>